<sequence>MASAFCSLCPTPTSLFSSHALIPTLQWRSSSSSRSPPLHISRVLSVETVPLSPSFTWNDVFENSRKEYVPQNSSDLTGFLEKVDRCNRGLEKLGEFIPFVIEEQIVGYIHKGFTKYLRDFNDIFTFSQYGGHVTLNMMLDKPEERTRAVAHVIKILGNKGIIPGIRNELYPVKPSFNAPAFFSIERAAAPYFGLKGYAIHVNGYVERDGQKFLWIGKRSLAKSTYPGKLDHLVAGGLPHGISVCENLVKECEEEAGISKVLADRAIAVGVVSYMDIDRYCFTRDVLFCYDLELPQDFVPTNQDGEVDSFRLIPVAQVANVVRKTSFFKDSCSLVIIDFLFRHGLIRPESPGYLDLYRRLRNGDCS</sequence>
<proteinExistence type="evidence at transcript level"/>
<reference key="1">
    <citation type="journal article" date="2000" name="Nature">
        <title>Sequence and analysis of chromosome 5 of the plant Arabidopsis thaliana.</title>
        <authorList>
            <person name="Tabata S."/>
            <person name="Kaneko T."/>
            <person name="Nakamura Y."/>
            <person name="Kotani H."/>
            <person name="Kato T."/>
            <person name="Asamizu E."/>
            <person name="Miyajima N."/>
            <person name="Sasamoto S."/>
            <person name="Kimura T."/>
            <person name="Hosouchi T."/>
            <person name="Kawashima K."/>
            <person name="Kohara M."/>
            <person name="Matsumoto M."/>
            <person name="Matsuno A."/>
            <person name="Muraki A."/>
            <person name="Nakayama S."/>
            <person name="Nakazaki N."/>
            <person name="Naruo K."/>
            <person name="Okumura S."/>
            <person name="Shinpo S."/>
            <person name="Takeuchi C."/>
            <person name="Wada T."/>
            <person name="Watanabe A."/>
            <person name="Yamada M."/>
            <person name="Yasuda M."/>
            <person name="Sato S."/>
            <person name="de la Bastide M."/>
            <person name="Huang E."/>
            <person name="Spiegel L."/>
            <person name="Gnoj L."/>
            <person name="O'Shaughnessy A."/>
            <person name="Preston R."/>
            <person name="Habermann K."/>
            <person name="Murray J."/>
            <person name="Johnson D."/>
            <person name="Rohlfing T."/>
            <person name="Nelson J."/>
            <person name="Stoneking T."/>
            <person name="Pepin K."/>
            <person name="Spieth J."/>
            <person name="Sekhon M."/>
            <person name="Armstrong J."/>
            <person name="Becker M."/>
            <person name="Belter E."/>
            <person name="Cordum H."/>
            <person name="Cordes M."/>
            <person name="Courtney L."/>
            <person name="Courtney W."/>
            <person name="Dante M."/>
            <person name="Du H."/>
            <person name="Edwards J."/>
            <person name="Fryman J."/>
            <person name="Haakensen B."/>
            <person name="Lamar E."/>
            <person name="Latreille P."/>
            <person name="Leonard S."/>
            <person name="Meyer R."/>
            <person name="Mulvaney E."/>
            <person name="Ozersky P."/>
            <person name="Riley A."/>
            <person name="Strowmatt C."/>
            <person name="Wagner-McPherson C."/>
            <person name="Wollam A."/>
            <person name="Yoakum M."/>
            <person name="Bell M."/>
            <person name="Dedhia N."/>
            <person name="Parnell L."/>
            <person name="Shah R."/>
            <person name="Rodriguez M."/>
            <person name="Hoon See L."/>
            <person name="Vil D."/>
            <person name="Baker J."/>
            <person name="Kirchoff K."/>
            <person name="Toth K."/>
            <person name="King L."/>
            <person name="Bahret A."/>
            <person name="Miller B."/>
            <person name="Marra M.A."/>
            <person name="Martienssen R."/>
            <person name="McCombie W.R."/>
            <person name="Wilson R.K."/>
            <person name="Murphy G."/>
            <person name="Bancroft I."/>
            <person name="Volckaert G."/>
            <person name="Wambutt R."/>
            <person name="Duesterhoeft A."/>
            <person name="Stiekema W."/>
            <person name="Pohl T."/>
            <person name="Entian K.-D."/>
            <person name="Terryn N."/>
            <person name="Hartley N."/>
            <person name="Bent E."/>
            <person name="Johnson S."/>
            <person name="Langham S.-A."/>
            <person name="McCullagh B."/>
            <person name="Robben J."/>
            <person name="Grymonprez B."/>
            <person name="Zimmermann W."/>
            <person name="Ramsperger U."/>
            <person name="Wedler H."/>
            <person name="Balke K."/>
            <person name="Wedler E."/>
            <person name="Peters S."/>
            <person name="van Staveren M."/>
            <person name="Dirkse W."/>
            <person name="Mooijman P."/>
            <person name="Klein Lankhorst R."/>
            <person name="Weitzenegger T."/>
            <person name="Bothe G."/>
            <person name="Rose M."/>
            <person name="Hauf J."/>
            <person name="Berneiser S."/>
            <person name="Hempel S."/>
            <person name="Feldpausch M."/>
            <person name="Lamberth S."/>
            <person name="Villarroel R."/>
            <person name="Gielen J."/>
            <person name="Ardiles W."/>
            <person name="Bents O."/>
            <person name="Lemcke K."/>
            <person name="Kolesov G."/>
            <person name="Mayer K.F.X."/>
            <person name="Rudd S."/>
            <person name="Schoof H."/>
            <person name="Schueller C."/>
            <person name="Zaccaria P."/>
            <person name="Mewes H.-W."/>
            <person name="Bevan M."/>
            <person name="Fransz P.F."/>
        </authorList>
    </citation>
    <scope>NUCLEOTIDE SEQUENCE [LARGE SCALE GENOMIC DNA]</scope>
    <source>
        <strain>cv. Columbia</strain>
    </source>
</reference>
<reference key="2">
    <citation type="journal article" date="2017" name="Plant J.">
        <title>Araport11: a complete reannotation of the Arabidopsis thaliana reference genome.</title>
        <authorList>
            <person name="Cheng C.Y."/>
            <person name="Krishnakumar V."/>
            <person name="Chan A.P."/>
            <person name="Thibaud-Nissen F."/>
            <person name="Schobel S."/>
            <person name="Town C.D."/>
        </authorList>
    </citation>
    <scope>GENOME REANNOTATION</scope>
    <source>
        <strain>cv. Columbia</strain>
    </source>
</reference>
<reference key="3">
    <citation type="journal article" date="2005" name="J. Biol. Chem.">
        <title>Comprehensive analysis of cytosolic nudix hydrolases in Arabidopsis thaliana.</title>
        <authorList>
            <person name="Ogawa T."/>
            <person name="Ueda Y."/>
            <person name="Yoshimura K."/>
            <person name="Shigeoka S."/>
        </authorList>
    </citation>
    <scope>NOMENCLATURE</scope>
</reference>
<reference key="4">
    <citation type="journal article" date="2008" name="Plant Physiol.">
        <title>Molecular characterization of organelle-type Nudix hydrolases in Arabidopsis.</title>
        <authorList>
            <person name="Ogawa T."/>
            <person name="Yoshimura K."/>
            <person name="Miyake H."/>
            <person name="Ishikawa K."/>
            <person name="Ito D."/>
            <person name="Tanabe N."/>
            <person name="Shigeoka S."/>
        </authorList>
    </citation>
    <scope>TISSUE SPECIFICITY</scope>
</reference>
<organism>
    <name type="scientific">Arabidopsis thaliana</name>
    <name type="common">Mouse-ear cress</name>
    <dbReference type="NCBI Taxonomy" id="3702"/>
    <lineage>
        <taxon>Eukaryota</taxon>
        <taxon>Viridiplantae</taxon>
        <taxon>Streptophyta</taxon>
        <taxon>Embryophyta</taxon>
        <taxon>Tracheophyta</taxon>
        <taxon>Spermatophyta</taxon>
        <taxon>Magnoliopsida</taxon>
        <taxon>eudicotyledons</taxon>
        <taxon>Gunneridae</taxon>
        <taxon>Pentapetalae</taxon>
        <taxon>rosids</taxon>
        <taxon>malvids</taxon>
        <taxon>Brassicales</taxon>
        <taxon>Brassicaceae</taxon>
        <taxon>Camelineae</taxon>
        <taxon>Arabidopsis</taxon>
    </lineage>
</organism>
<keyword id="KW-0025">Alternative splicing</keyword>
<keyword id="KW-0150">Chloroplast</keyword>
<keyword id="KW-0378">Hydrolase</keyword>
<keyword id="KW-0460">Magnesium</keyword>
<keyword id="KW-0464">Manganese</keyword>
<keyword id="KW-0479">Metal-binding</keyword>
<keyword id="KW-0934">Plastid</keyword>
<keyword id="KW-1185">Reference proteome</keyword>
<keyword id="KW-0809">Transit peptide</keyword>
<feature type="transit peptide" description="Chloroplast" evidence="2">
    <location>
        <begin position="1"/>
        <end position="30"/>
    </location>
</feature>
<feature type="chain" id="PRO_0000019966" description="Nudix hydrolase 24, chloroplastic">
    <location>
        <begin position="31"/>
        <end position="365"/>
    </location>
</feature>
<feature type="domain" description="Nudix hydrolase" evidence="3">
    <location>
        <begin position="196"/>
        <end position="337"/>
    </location>
</feature>
<feature type="short sequence motif" description="Nudix box">
    <location>
        <begin position="235"/>
        <end position="256"/>
    </location>
</feature>
<feature type="binding site" evidence="1">
    <location>
        <position position="250"/>
    </location>
    <ligand>
        <name>Mg(2+)</name>
        <dbReference type="ChEBI" id="CHEBI:18420"/>
    </ligand>
</feature>
<feature type="binding site" evidence="1">
    <location>
        <position position="254"/>
    </location>
    <ligand>
        <name>Mg(2+)</name>
        <dbReference type="ChEBI" id="CHEBI:18420"/>
    </ligand>
</feature>
<dbReference type="EC" id="3.6.1.-"/>
<dbReference type="EMBL" id="AF296837">
    <property type="status" value="NOT_ANNOTATED_CDS"/>
    <property type="molecule type" value="Genomic_DNA"/>
</dbReference>
<dbReference type="EMBL" id="CP002688">
    <property type="protein sequence ID" value="AED92711.1"/>
    <property type="molecule type" value="Genomic_DNA"/>
</dbReference>
<dbReference type="RefSeq" id="NP_197448.2">
    <molecule id="P0C026-1"/>
    <property type="nucleotide sequence ID" value="NM_121952.3"/>
</dbReference>
<dbReference type="SMR" id="P0C026"/>
<dbReference type="FunCoup" id="P0C026">
    <property type="interactions" value="340"/>
</dbReference>
<dbReference type="STRING" id="3702.P0C026"/>
<dbReference type="PaxDb" id="3702-AT5G19470.1"/>
<dbReference type="ProteomicsDB" id="234940">
    <molecule id="P0C026-1"/>
</dbReference>
<dbReference type="EnsemblPlants" id="AT5G19470.1">
    <molecule id="P0C026-1"/>
    <property type="protein sequence ID" value="AT5G19470.1"/>
    <property type="gene ID" value="AT5G19470"/>
</dbReference>
<dbReference type="GeneID" id="832067"/>
<dbReference type="Gramene" id="AT5G19470.1">
    <molecule id="P0C026-1"/>
    <property type="protein sequence ID" value="AT5G19470.1"/>
    <property type="gene ID" value="AT5G19470"/>
</dbReference>
<dbReference type="KEGG" id="ath:AT5G19470"/>
<dbReference type="Araport" id="AT5G19470"/>
<dbReference type="TAIR" id="AT5G19470">
    <property type="gene designation" value="NUDT24"/>
</dbReference>
<dbReference type="eggNOG" id="KOG4313">
    <property type="taxonomic scope" value="Eukaryota"/>
</dbReference>
<dbReference type="InParanoid" id="P0C026"/>
<dbReference type="OMA" id="TPTFSWD"/>
<dbReference type="PhylomeDB" id="P0C026"/>
<dbReference type="PRO" id="PR:P0C026"/>
<dbReference type="Proteomes" id="UP000006548">
    <property type="component" value="Chromosome 5"/>
</dbReference>
<dbReference type="ExpressionAtlas" id="P0C026">
    <property type="expression patterns" value="baseline and differential"/>
</dbReference>
<dbReference type="GO" id="GO:0009507">
    <property type="term" value="C:chloroplast"/>
    <property type="evidence" value="ECO:0007669"/>
    <property type="project" value="UniProtKB-SubCell"/>
</dbReference>
<dbReference type="GO" id="GO:0016787">
    <property type="term" value="F:hydrolase activity"/>
    <property type="evidence" value="ECO:0007669"/>
    <property type="project" value="UniProtKB-KW"/>
</dbReference>
<dbReference type="GO" id="GO:0046872">
    <property type="term" value="F:metal ion binding"/>
    <property type="evidence" value="ECO:0007669"/>
    <property type="project" value="UniProtKB-KW"/>
</dbReference>
<dbReference type="CDD" id="cd03676">
    <property type="entry name" value="NUDIX_Tnr3_like"/>
    <property type="match status" value="1"/>
</dbReference>
<dbReference type="FunFam" id="3.90.79.10:FF:000019">
    <property type="entry name" value="Thiamin pyrophosphokinase, putative"/>
    <property type="match status" value="1"/>
</dbReference>
<dbReference type="Gene3D" id="3.90.79.10">
    <property type="entry name" value="Nucleoside Triphosphate Pyrophosphohydrolase"/>
    <property type="match status" value="1"/>
</dbReference>
<dbReference type="InterPro" id="IPR031804">
    <property type="entry name" value="DUF4743"/>
</dbReference>
<dbReference type="InterPro" id="IPR015797">
    <property type="entry name" value="NUDIX_hydrolase-like_dom_sf"/>
</dbReference>
<dbReference type="InterPro" id="IPR000086">
    <property type="entry name" value="NUDIX_hydrolase_dom"/>
</dbReference>
<dbReference type="PANTHER" id="PTHR13622">
    <property type="entry name" value="THIAMIN PYROPHOSPHOKINASE"/>
    <property type="match status" value="1"/>
</dbReference>
<dbReference type="PANTHER" id="PTHR13622:SF8">
    <property type="entry name" value="THIAMIN PYROPHOSPHOKINASE 1"/>
    <property type="match status" value="1"/>
</dbReference>
<dbReference type="Pfam" id="PF15916">
    <property type="entry name" value="DUF4743"/>
    <property type="match status" value="1"/>
</dbReference>
<dbReference type="Pfam" id="PF00293">
    <property type="entry name" value="NUDIX"/>
    <property type="match status" value="1"/>
</dbReference>
<dbReference type="SUPFAM" id="SSF55811">
    <property type="entry name" value="Nudix"/>
    <property type="match status" value="1"/>
</dbReference>
<dbReference type="PROSITE" id="PS51462">
    <property type="entry name" value="NUDIX"/>
    <property type="match status" value="1"/>
</dbReference>
<protein>
    <recommendedName>
        <fullName>Nudix hydrolase 24, chloroplastic</fullName>
        <shortName>AtNUDT24</shortName>
        <ecNumber>3.6.1.-</ecNumber>
    </recommendedName>
</protein>
<evidence type="ECO:0000250" key="1"/>
<evidence type="ECO:0000255" key="2"/>
<evidence type="ECO:0000255" key="3">
    <source>
        <dbReference type="PROSITE-ProRule" id="PRU00794"/>
    </source>
</evidence>
<evidence type="ECO:0000269" key="4">
    <source>
    </source>
</evidence>
<evidence type="ECO:0000305" key="5"/>
<comment type="function">
    <text evidence="1">Probably mediates the hydrolysis of some nucleoside diphosphate derivatives.</text>
</comment>
<comment type="cofactor">
    <cofactor evidence="1">
        <name>Mg(2+)</name>
        <dbReference type="ChEBI" id="CHEBI:18420"/>
    </cofactor>
    <cofactor evidence="1">
        <name>Mn(2+)</name>
        <dbReference type="ChEBI" id="CHEBI:29035"/>
    </cofactor>
</comment>
<comment type="subcellular location">
    <subcellularLocation>
        <location evidence="5">Plastid</location>
        <location evidence="5">Chloroplast</location>
    </subcellularLocation>
</comment>
<comment type="alternative products">
    <event type="alternative splicing"/>
    <isoform>
        <id>P0C026-1</id>
        <name>1</name>
        <sequence type="displayed"/>
    </isoform>
    <text>A number of isoforms are produced. According to EST sequences.</text>
</comment>
<comment type="tissue specificity">
    <text evidence="4">Expressed in leaves.</text>
</comment>
<comment type="similarity">
    <text evidence="5">Belongs to the Nudix hydrolase family.</text>
</comment>
<accession>P0C026</accession>
<gene>
    <name type="primary">NUDT24</name>
    <name type="synonym">NUDX24</name>
    <name type="ordered locus">At5g19470</name>
    <name type="ORF">F7K24.220</name>
</gene>
<name>NUD24_ARATH</name>